<dbReference type="EC" id="2.4.1.227" evidence="1"/>
<dbReference type="EMBL" id="CP000538">
    <property type="protein sequence ID" value="EAQ72050.1"/>
    <property type="molecule type" value="Genomic_DNA"/>
</dbReference>
<dbReference type="RefSeq" id="WP_002856115.1">
    <property type="nucleotide sequence ID" value="NC_008787.1"/>
</dbReference>
<dbReference type="SMR" id="A1W027"/>
<dbReference type="CAZy" id="GT28">
    <property type="family name" value="Glycosyltransferase Family 28"/>
</dbReference>
<dbReference type="KEGG" id="cjj:CJJ81176_1058"/>
<dbReference type="eggNOG" id="COG0707">
    <property type="taxonomic scope" value="Bacteria"/>
</dbReference>
<dbReference type="HOGENOM" id="CLU_037404_2_1_7"/>
<dbReference type="UniPathway" id="UPA00219"/>
<dbReference type="Proteomes" id="UP000000646">
    <property type="component" value="Chromosome"/>
</dbReference>
<dbReference type="GO" id="GO:0005886">
    <property type="term" value="C:plasma membrane"/>
    <property type="evidence" value="ECO:0007669"/>
    <property type="project" value="UniProtKB-SubCell"/>
</dbReference>
<dbReference type="GO" id="GO:0051991">
    <property type="term" value="F:UDP-N-acetyl-D-glucosamine:N-acetylmuramoyl-L-alanyl-D-glutamyl-meso-2,6-diaminopimelyl-D-alanyl-D-alanine-diphosphoundecaprenol 4-beta-N-acetylglucosaminlytransferase activity"/>
    <property type="evidence" value="ECO:0007669"/>
    <property type="project" value="RHEA"/>
</dbReference>
<dbReference type="GO" id="GO:0050511">
    <property type="term" value="F:undecaprenyldiphospho-muramoylpentapeptide beta-N-acetylglucosaminyltransferase activity"/>
    <property type="evidence" value="ECO:0007669"/>
    <property type="project" value="UniProtKB-UniRule"/>
</dbReference>
<dbReference type="GO" id="GO:0005975">
    <property type="term" value="P:carbohydrate metabolic process"/>
    <property type="evidence" value="ECO:0007669"/>
    <property type="project" value="InterPro"/>
</dbReference>
<dbReference type="GO" id="GO:0051301">
    <property type="term" value="P:cell division"/>
    <property type="evidence" value="ECO:0007669"/>
    <property type="project" value="UniProtKB-KW"/>
</dbReference>
<dbReference type="GO" id="GO:0071555">
    <property type="term" value="P:cell wall organization"/>
    <property type="evidence" value="ECO:0007669"/>
    <property type="project" value="UniProtKB-KW"/>
</dbReference>
<dbReference type="GO" id="GO:0030259">
    <property type="term" value="P:lipid glycosylation"/>
    <property type="evidence" value="ECO:0007669"/>
    <property type="project" value="UniProtKB-UniRule"/>
</dbReference>
<dbReference type="GO" id="GO:0009252">
    <property type="term" value="P:peptidoglycan biosynthetic process"/>
    <property type="evidence" value="ECO:0007669"/>
    <property type="project" value="UniProtKB-UniRule"/>
</dbReference>
<dbReference type="GO" id="GO:0008360">
    <property type="term" value="P:regulation of cell shape"/>
    <property type="evidence" value="ECO:0007669"/>
    <property type="project" value="UniProtKB-KW"/>
</dbReference>
<dbReference type="CDD" id="cd03785">
    <property type="entry name" value="GT28_MurG"/>
    <property type="match status" value="1"/>
</dbReference>
<dbReference type="Gene3D" id="3.40.50.2000">
    <property type="entry name" value="Glycogen Phosphorylase B"/>
    <property type="match status" value="2"/>
</dbReference>
<dbReference type="HAMAP" id="MF_00033">
    <property type="entry name" value="MurG"/>
    <property type="match status" value="1"/>
</dbReference>
<dbReference type="InterPro" id="IPR006009">
    <property type="entry name" value="GlcNAc_MurG"/>
</dbReference>
<dbReference type="InterPro" id="IPR007235">
    <property type="entry name" value="Glyco_trans_28_C"/>
</dbReference>
<dbReference type="InterPro" id="IPR004276">
    <property type="entry name" value="GlycoTrans_28_N"/>
</dbReference>
<dbReference type="NCBIfam" id="TIGR01133">
    <property type="entry name" value="murG"/>
    <property type="match status" value="1"/>
</dbReference>
<dbReference type="PANTHER" id="PTHR21015:SF22">
    <property type="entry name" value="GLYCOSYLTRANSFERASE"/>
    <property type="match status" value="1"/>
</dbReference>
<dbReference type="PANTHER" id="PTHR21015">
    <property type="entry name" value="UDP-N-ACETYLGLUCOSAMINE--N-ACETYLMURAMYL-(PENTAPEPTIDE) PYROPHOSPHORYL-UNDECAPRENOL N-ACETYLGLUCOSAMINE TRANSFERASE 1"/>
    <property type="match status" value="1"/>
</dbReference>
<dbReference type="Pfam" id="PF04101">
    <property type="entry name" value="Glyco_tran_28_C"/>
    <property type="match status" value="1"/>
</dbReference>
<dbReference type="Pfam" id="PF03033">
    <property type="entry name" value="Glyco_transf_28"/>
    <property type="match status" value="1"/>
</dbReference>
<dbReference type="SUPFAM" id="SSF53756">
    <property type="entry name" value="UDP-Glycosyltransferase/glycogen phosphorylase"/>
    <property type="match status" value="1"/>
</dbReference>
<feature type="chain" id="PRO_0000315082" description="UDP-N-acetylglucosamine--N-acetylmuramyl-(pentapeptide) pyrophosphoryl-undecaprenol N-acetylglucosamine transferase">
    <location>
        <begin position="1"/>
        <end position="342"/>
    </location>
</feature>
<feature type="binding site" evidence="1">
    <location>
        <begin position="10"/>
        <end position="12"/>
    </location>
    <ligand>
        <name>UDP-N-acetyl-alpha-D-glucosamine</name>
        <dbReference type="ChEBI" id="CHEBI:57705"/>
    </ligand>
</feature>
<feature type="binding site" evidence="1">
    <location>
        <position position="124"/>
    </location>
    <ligand>
        <name>UDP-N-acetyl-alpha-D-glucosamine</name>
        <dbReference type="ChEBI" id="CHEBI:57705"/>
    </ligand>
</feature>
<feature type="binding site" evidence="1">
    <location>
        <position position="177"/>
    </location>
    <ligand>
        <name>UDP-N-acetyl-alpha-D-glucosamine</name>
        <dbReference type="ChEBI" id="CHEBI:57705"/>
    </ligand>
</feature>
<feature type="binding site" evidence="1">
    <location>
        <position position="275"/>
    </location>
    <ligand>
        <name>UDP-N-acetyl-alpha-D-glucosamine</name>
        <dbReference type="ChEBI" id="CHEBI:57705"/>
    </ligand>
</feature>
<comment type="function">
    <text evidence="1">Cell wall formation. Catalyzes the transfer of a GlcNAc subunit on undecaprenyl-pyrophosphoryl-MurNAc-pentapeptide (lipid intermediate I) to form undecaprenyl-pyrophosphoryl-MurNAc-(pentapeptide)GlcNAc (lipid intermediate II).</text>
</comment>
<comment type="catalytic activity">
    <reaction evidence="1">
        <text>di-trans,octa-cis-undecaprenyl diphospho-N-acetyl-alpha-D-muramoyl-L-alanyl-D-glutamyl-meso-2,6-diaminopimeloyl-D-alanyl-D-alanine + UDP-N-acetyl-alpha-D-glucosamine = di-trans,octa-cis-undecaprenyl diphospho-[N-acetyl-alpha-D-glucosaminyl-(1-&gt;4)]-N-acetyl-alpha-D-muramoyl-L-alanyl-D-glutamyl-meso-2,6-diaminopimeloyl-D-alanyl-D-alanine + UDP + H(+)</text>
        <dbReference type="Rhea" id="RHEA:31227"/>
        <dbReference type="ChEBI" id="CHEBI:15378"/>
        <dbReference type="ChEBI" id="CHEBI:57705"/>
        <dbReference type="ChEBI" id="CHEBI:58223"/>
        <dbReference type="ChEBI" id="CHEBI:61387"/>
        <dbReference type="ChEBI" id="CHEBI:61388"/>
        <dbReference type="EC" id="2.4.1.227"/>
    </reaction>
</comment>
<comment type="pathway">
    <text evidence="1">Cell wall biogenesis; peptidoglycan biosynthesis.</text>
</comment>
<comment type="subcellular location">
    <subcellularLocation>
        <location evidence="1">Cell inner membrane</location>
        <topology evidence="1">Peripheral membrane protein</topology>
        <orientation evidence="1">Cytoplasmic side</orientation>
    </subcellularLocation>
</comment>
<comment type="similarity">
    <text evidence="1">Belongs to the glycosyltransferase 28 family. MurG subfamily.</text>
</comment>
<evidence type="ECO:0000255" key="1">
    <source>
        <dbReference type="HAMAP-Rule" id="MF_00033"/>
    </source>
</evidence>
<gene>
    <name evidence="1" type="primary">murG</name>
    <name type="ordered locus">CJJ81176_1058</name>
</gene>
<organism>
    <name type="scientific">Campylobacter jejuni subsp. jejuni serotype O:23/36 (strain 81-176)</name>
    <dbReference type="NCBI Taxonomy" id="354242"/>
    <lineage>
        <taxon>Bacteria</taxon>
        <taxon>Pseudomonadati</taxon>
        <taxon>Campylobacterota</taxon>
        <taxon>Epsilonproteobacteria</taxon>
        <taxon>Campylobacterales</taxon>
        <taxon>Campylobacteraceae</taxon>
        <taxon>Campylobacter</taxon>
    </lineage>
</organism>
<protein>
    <recommendedName>
        <fullName evidence="1">UDP-N-acetylglucosamine--N-acetylmuramyl-(pentapeptide) pyrophosphoryl-undecaprenol N-acetylglucosamine transferase</fullName>
        <ecNumber evidence="1">2.4.1.227</ecNumber>
    </recommendedName>
    <alternativeName>
        <fullName evidence="1">Undecaprenyl-PP-MurNAc-pentapeptide-UDPGlcNAc GlcNAc transferase</fullName>
    </alternativeName>
</protein>
<sequence length="342" mass="38684">MTIALTGGGTGGHLAIVRCLLESAIKKNIECVYIGSQNGQDKAWFENEVRFKEKFFLSSKGVVNQSKFDKISSLLHTLKLSKDCREIFKKYHIQAVFSVGGYSAAPASFAALFSHLPLFIHEQNSKSGSLNMLLKPFATKFFSAFEKEISPYPVADKFFDNARIRKELKNIIFLGGSQGAQFINELALNLAPKLQEQNIKIIHQCGKNDFEKCKKHYQSLNIQADIFDFSLNLEEKMKNADLAISRAGASTLFELCANTLPTIFIPYPYAAKNHQYFNAKFLQDQALCQIFMQNSINLDEFFKSILKLNLENISTRLQNITQKNGADMLIQKALFDNLTFIR</sequence>
<name>MURG_CAMJJ</name>
<proteinExistence type="inferred from homology"/>
<keyword id="KW-0131">Cell cycle</keyword>
<keyword id="KW-0132">Cell division</keyword>
<keyword id="KW-0997">Cell inner membrane</keyword>
<keyword id="KW-1003">Cell membrane</keyword>
<keyword id="KW-0133">Cell shape</keyword>
<keyword id="KW-0961">Cell wall biogenesis/degradation</keyword>
<keyword id="KW-0328">Glycosyltransferase</keyword>
<keyword id="KW-0472">Membrane</keyword>
<keyword id="KW-0573">Peptidoglycan synthesis</keyword>
<keyword id="KW-0808">Transferase</keyword>
<accession>A1W027</accession>
<reference key="1">
    <citation type="submission" date="2006-12" db="EMBL/GenBank/DDBJ databases">
        <authorList>
            <person name="Fouts D.E."/>
            <person name="Nelson K.E."/>
            <person name="Sebastian Y."/>
        </authorList>
    </citation>
    <scope>NUCLEOTIDE SEQUENCE [LARGE SCALE GENOMIC DNA]</scope>
    <source>
        <strain>81-176</strain>
    </source>
</reference>